<name>YPTO_STUST</name>
<evidence type="ECO:0000255" key="1">
    <source>
        <dbReference type="HAMAP-Rule" id="MF_00636"/>
    </source>
</evidence>
<keyword id="KW-0067">ATP-binding</keyword>
<keyword id="KW-0342">GTP-binding</keyword>
<keyword id="KW-0547">Nucleotide-binding</keyword>
<dbReference type="EMBL" id="AJ496594">
    <property type="protein sequence ID" value="CAD43115.1"/>
    <property type="molecule type" value="Genomic_DNA"/>
</dbReference>
<dbReference type="RefSeq" id="WP_011912216.1">
    <property type="nucleotide sequence ID" value="NZ_RXOW01000002.1"/>
</dbReference>
<dbReference type="SMR" id="Q8KLV8"/>
<dbReference type="PATRIC" id="fig|316.107.peg.3141"/>
<dbReference type="eggNOG" id="COG1660">
    <property type="taxonomic scope" value="Bacteria"/>
</dbReference>
<dbReference type="GO" id="GO:0005524">
    <property type="term" value="F:ATP binding"/>
    <property type="evidence" value="ECO:0007669"/>
    <property type="project" value="UniProtKB-UniRule"/>
</dbReference>
<dbReference type="GO" id="GO:0005525">
    <property type="term" value="F:GTP binding"/>
    <property type="evidence" value="ECO:0007669"/>
    <property type="project" value="UniProtKB-UniRule"/>
</dbReference>
<dbReference type="Gene3D" id="3.40.50.300">
    <property type="entry name" value="P-loop containing nucleotide triphosphate hydrolases"/>
    <property type="match status" value="1"/>
</dbReference>
<dbReference type="HAMAP" id="MF_00636">
    <property type="entry name" value="RapZ_like"/>
    <property type="match status" value="1"/>
</dbReference>
<dbReference type="InterPro" id="IPR027417">
    <property type="entry name" value="P-loop_NTPase"/>
</dbReference>
<dbReference type="InterPro" id="IPR005337">
    <property type="entry name" value="RapZ-like"/>
</dbReference>
<dbReference type="InterPro" id="IPR053930">
    <property type="entry name" value="RapZ-like_N"/>
</dbReference>
<dbReference type="InterPro" id="IPR053931">
    <property type="entry name" value="RapZ_C"/>
</dbReference>
<dbReference type="NCBIfam" id="NF003828">
    <property type="entry name" value="PRK05416.1"/>
    <property type="match status" value="1"/>
</dbReference>
<dbReference type="PANTHER" id="PTHR30448">
    <property type="entry name" value="RNASE ADAPTER PROTEIN RAPZ"/>
    <property type="match status" value="1"/>
</dbReference>
<dbReference type="PANTHER" id="PTHR30448:SF0">
    <property type="entry name" value="RNASE ADAPTER PROTEIN RAPZ"/>
    <property type="match status" value="1"/>
</dbReference>
<dbReference type="Pfam" id="PF22740">
    <property type="entry name" value="PapZ_C"/>
    <property type="match status" value="1"/>
</dbReference>
<dbReference type="Pfam" id="PF03668">
    <property type="entry name" value="RapZ-like_N"/>
    <property type="match status" value="1"/>
</dbReference>
<dbReference type="PIRSF" id="PIRSF005052">
    <property type="entry name" value="P-loopkin"/>
    <property type="match status" value="1"/>
</dbReference>
<dbReference type="SUPFAM" id="SSF52540">
    <property type="entry name" value="P-loop containing nucleoside triphosphate hydrolases"/>
    <property type="match status" value="1"/>
</dbReference>
<accession>Q8KLV8</accession>
<proteinExistence type="inferred from homology"/>
<protein>
    <recommendedName>
        <fullName evidence="1">Nucleotide-binding protein in ptsN-ptsO intergenic region</fullName>
    </recommendedName>
</protein>
<organism>
    <name type="scientific">Stutzerimonas stutzeri</name>
    <name type="common">Pseudomonas stutzeri</name>
    <dbReference type="NCBI Taxonomy" id="316"/>
    <lineage>
        <taxon>Bacteria</taxon>
        <taxon>Pseudomonadati</taxon>
        <taxon>Pseudomonadota</taxon>
        <taxon>Gammaproteobacteria</taxon>
        <taxon>Pseudomonadales</taxon>
        <taxon>Pseudomonadaceae</taxon>
        <taxon>Stutzerimonas</taxon>
    </lineage>
</organism>
<comment type="function">
    <text evidence="1">Displays ATPase and GTPase activities.</text>
</comment>
<comment type="similarity">
    <text evidence="1">Belongs to the RapZ-like family.</text>
</comment>
<feature type="chain" id="PRO_0000107748" description="Nucleotide-binding protein in ptsN-ptsO intergenic region">
    <location>
        <begin position="1"/>
        <end position="285"/>
    </location>
</feature>
<feature type="binding site" evidence="1">
    <location>
        <begin position="8"/>
        <end position="15"/>
    </location>
    <ligand>
        <name>ATP</name>
        <dbReference type="ChEBI" id="CHEBI:30616"/>
    </ligand>
</feature>
<feature type="binding site" evidence="1">
    <location>
        <begin position="60"/>
        <end position="63"/>
    </location>
    <ligand>
        <name>GTP</name>
        <dbReference type="ChEBI" id="CHEBI:37565"/>
    </ligand>
</feature>
<reference key="1">
    <citation type="submission" date="2002-07" db="EMBL/GenBank/DDBJ databases">
        <title>Involvement of rpoN and associated genes of Pseudomonas stutzeri A15 in the colonisation of rice roots.</title>
        <authorList>
            <person name="Carreno-Lopez R."/>
            <person name="Ma L."/>
            <person name="Lin M."/>
            <person name="Desnoues N."/>
            <person name="Guo X."/>
            <person name="Elmerich C."/>
        </authorList>
    </citation>
    <scope>NUCLEOTIDE SEQUENCE [GENOMIC DNA]</scope>
    <source>
        <strain>A15</strain>
    </source>
</reference>
<sequence>MRLIIVSGRSGSGKSTALNVLEDNGFYCIDNLPAGLLPELAERALLHTELLHPQVAVSIDARNLPSQLKRFPELLEEVRARHIQCDVLYLDADDETLLKRFSETRRRHPLTNESRSLAEAIRDEELLLAAIIDHADLKIDTTHLNLYQLRDMLKLRLLNKPEPGTAFLIESFGFKRGMPVDADLVFDVRCLPNPYWKAELRDFSGLDQPVIDYLAAQPDVEEMFQDIHAYLNKWLPRFAASNRAYVTIAIGCTGGHHRSVYLAERLGLALKEPLKNLQVRHRDLA</sequence>